<evidence type="ECO:0000255" key="1">
    <source>
        <dbReference type="HAMAP-Rule" id="MF_01605"/>
    </source>
</evidence>
<sequence>MKQTVYIASPESQQIHVWNLNHEGALTLTQVVDVPGQVQPMVVSPDKRYLYVGVRPEFRVLAYRIAPDDGALTFAAESALPGSPTHISTDHQGQFVFVGSYNAGNVSVTRLEDGLPVGVVDVVEGLDGCHSANISPDNRTLWVPALKQDRICLFTVSDDGHLVAQDPAEVTTVEGAGPRHMVFHPNEQYAYCVNELNSSVDVWELKDPHGNIECVQTLDMMPENFSDTRWAADIHITPDGRHLYACDRTASLITVFSVSEDGSVLSKEGFQPTETQPRGFNVDHSGKYLIAAGQKSHHISVYEIVGEQGLLHEKGRYAVGQGPMWVVVNAH</sequence>
<organism>
    <name type="scientific">Escherichia coli (strain ATCC 8739 / DSM 1576 / NBRC 3972 / NCIMB 8545 / WDCM 00012 / Crooks)</name>
    <dbReference type="NCBI Taxonomy" id="481805"/>
    <lineage>
        <taxon>Bacteria</taxon>
        <taxon>Pseudomonadati</taxon>
        <taxon>Pseudomonadota</taxon>
        <taxon>Gammaproteobacteria</taxon>
        <taxon>Enterobacterales</taxon>
        <taxon>Enterobacteriaceae</taxon>
        <taxon>Escherichia</taxon>
    </lineage>
</organism>
<protein>
    <recommendedName>
        <fullName evidence="1">6-phosphogluconolactonase</fullName>
        <shortName evidence="1">6-P-gluconolactonase</shortName>
        <ecNumber evidence="1">3.1.1.31</ecNumber>
    </recommendedName>
</protein>
<proteinExistence type="inferred from homology"/>
<gene>
    <name evidence="1" type="primary">pgl</name>
    <name type="ordered locus">EcolC_2895</name>
</gene>
<comment type="function">
    <text evidence="1">Catalyzes the hydrolysis of 6-phosphogluconolactone to 6-phosphogluconate.</text>
</comment>
<comment type="catalytic activity">
    <reaction evidence="1">
        <text>6-phospho-D-glucono-1,5-lactone + H2O = 6-phospho-D-gluconate + H(+)</text>
        <dbReference type="Rhea" id="RHEA:12556"/>
        <dbReference type="ChEBI" id="CHEBI:15377"/>
        <dbReference type="ChEBI" id="CHEBI:15378"/>
        <dbReference type="ChEBI" id="CHEBI:57955"/>
        <dbReference type="ChEBI" id="CHEBI:58759"/>
        <dbReference type="EC" id="3.1.1.31"/>
    </reaction>
</comment>
<comment type="pathway">
    <text evidence="1">Carbohydrate degradation; pentose phosphate pathway; D-ribulose 5-phosphate from D-glucose 6-phosphate (oxidative stage): step 2/3.</text>
</comment>
<comment type="similarity">
    <text evidence="1">Belongs to the cycloisomerase 2 family.</text>
</comment>
<accession>B1IXL9</accession>
<feature type="chain" id="PRO_1000088029" description="6-phosphogluconolactonase">
    <location>
        <begin position="1"/>
        <end position="331"/>
    </location>
</feature>
<feature type="modified residue" description="N6-acetyllysine" evidence="1">
    <location>
        <position position="287"/>
    </location>
</feature>
<name>6PGL_ECOLC</name>
<keyword id="KW-0007">Acetylation</keyword>
<keyword id="KW-0119">Carbohydrate metabolism</keyword>
<keyword id="KW-0313">Glucose metabolism</keyword>
<keyword id="KW-0378">Hydrolase</keyword>
<reference key="1">
    <citation type="submission" date="2008-02" db="EMBL/GenBank/DDBJ databases">
        <title>Complete sequence of Escherichia coli C str. ATCC 8739.</title>
        <authorList>
            <person name="Copeland A."/>
            <person name="Lucas S."/>
            <person name="Lapidus A."/>
            <person name="Glavina del Rio T."/>
            <person name="Dalin E."/>
            <person name="Tice H."/>
            <person name="Bruce D."/>
            <person name="Goodwin L."/>
            <person name="Pitluck S."/>
            <person name="Kiss H."/>
            <person name="Brettin T."/>
            <person name="Detter J.C."/>
            <person name="Han C."/>
            <person name="Kuske C.R."/>
            <person name="Schmutz J."/>
            <person name="Larimer F."/>
            <person name="Land M."/>
            <person name="Hauser L."/>
            <person name="Kyrpides N."/>
            <person name="Mikhailova N."/>
            <person name="Ingram L."/>
            <person name="Richardson P."/>
        </authorList>
    </citation>
    <scope>NUCLEOTIDE SEQUENCE [LARGE SCALE GENOMIC DNA]</scope>
    <source>
        <strain>ATCC 8739 / DSM 1576 / NBRC 3972 / NCIMB 8545 / WDCM 00012 / Crooks</strain>
    </source>
</reference>
<dbReference type="EC" id="3.1.1.31" evidence="1"/>
<dbReference type="EMBL" id="CP000946">
    <property type="protein sequence ID" value="ACA78522.1"/>
    <property type="molecule type" value="Genomic_DNA"/>
</dbReference>
<dbReference type="RefSeq" id="WP_000815435.1">
    <property type="nucleotide sequence ID" value="NZ_MTFT01000029.1"/>
</dbReference>
<dbReference type="SMR" id="B1IXL9"/>
<dbReference type="GeneID" id="86945650"/>
<dbReference type="KEGG" id="ecl:EcolC_2895"/>
<dbReference type="HOGENOM" id="CLU_038716_2_0_6"/>
<dbReference type="UniPathway" id="UPA00115">
    <property type="reaction ID" value="UER00409"/>
</dbReference>
<dbReference type="GO" id="GO:0005829">
    <property type="term" value="C:cytosol"/>
    <property type="evidence" value="ECO:0007669"/>
    <property type="project" value="TreeGrafter"/>
</dbReference>
<dbReference type="GO" id="GO:0017057">
    <property type="term" value="F:6-phosphogluconolactonase activity"/>
    <property type="evidence" value="ECO:0007669"/>
    <property type="project" value="UniProtKB-UniRule"/>
</dbReference>
<dbReference type="GO" id="GO:0006006">
    <property type="term" value="P:glucose metabolic process"/>
    <property type="evidence" value="ECO:0007669"/>
    <property type="project" value="UniProtKB-KW"/>
</dbReference>
<dbReference type="GO" id="GO:0009051">
    <property type="term" value="P:pentose-phosphate shunt, oxidative branch"/>
    <property type="evidence" value="ECO:0007669"/>
    <property type="project" value="UniProtKB-UniRule"/>
</dbReference>
<dbReference type="FunFam" id="2.130.10.10:FF:000051">
    <property type="entry name" value="6-phosphogluconolactonase"/>
    <property type="match status" value="1"/>
</dbReference>
<dbReference type="Gene3D" id="2.130.10.10">
    <property type="entry name" value="YVTN repeat-like/Quinoprotein amine dehydrogenase"/>
    <property type="match status" value="1"/>
</dbReference>
<dbReference type="HAMAP" id="MF_01605">
    <property type="entry name" value="6P_gluconolactonase"/>
    <property type="match status" value="1"/>
</dbReference>
<dbReference type="InterPro" id="IPR022528">
    <property type="entry name" value="6-phosphogluconolactonase_YbhE"/>
</dbReference>
<dbReference type="InterPro" id="IPR050282">
    <property type="entry name" value="Cycloisomerase_2"/>
</dbReference>
<dbReference type="InterPro" id="IPR019405">
    <property type="entry name" value="Lactonase_7-beta_prop"/>
</dbReference>
<dbReference type="InterPro" id="IPR011045">
    <property type="entry name" value="N2O_reductase_N"/>
</dbReference>
<dbReference type="InterPro" id="IPR015943">
    <property type="entry name" value="WD40/YVTN_repeat-like_dom_sf"/>
</dbReference>
<dbReference type="NCBIfam" id="NF008258">
    <property type="entry name" value="PRK11028.1"/>
    <property type="match status" value="1"/>
</dbReference>
<dbReference type="PANTHER" id="PTHR30344:SF1">
    <property type="entry name" value="6-PHOSPHOGLUCONOLACTONASE"/>
    <property type="match status" value="1"/>
</dbReference>
<dbReference type="PANTHER" id="PTHR30344">
    <property type="entry name" value="6-PHOSPHOGLUCONOLACTONASE-RELATED"/>
    <property type="match status" value="1"/>
</dbReference>
<dbReference type="Pfam" id="PF10282">
    <property type="entry name" value="Lactonase"/>
    <property type="match status" value="1"/>
</dbReference>
<dbReference type="SUPFAM" id="SSF50974">
    <property type="entry name" value="Nitrous oxide reductase, N-terminal domain"/>
    <property type="match status" value="1"/>
</dbReference>